<reference key="1">
    <citation type="submission" date="2006-04" db="EMBL/GenBank/DDBJ databases">
        <title>Complete sequence of chromosome of Deinococcus geothermalis DSM 11300.</title>
        <authorList>
            <person name="Copeland A."/>
            <person name="Lucas S."/>
            <person name="Lapidus A."/>
            <person name="Barry K."/>
            <person name="Detter J.C."/>
            <person name="Glavina del Rio T."/>
            <person name="Hammon N."/>
            <person name="Israni S."/>
            <person name="Dalin E."/>
            <person name="Tice H."/>
            <person name="Pitluck S."/>
            <person name="Brettin T."/>
            <person name="Bruce D."/>
            <person name="Han C."/>
            <person name="Tapia R."/>
            <person name="Saunders E."/>
            <person name="Gilna P."/>
            <person name="Schmutz J."/>
            <person name="Larimer F."/>
            <person name="Land M."/>
            <person name="Hauser L."/>
            <person name="Kyrpides N."/>
            <person name="Kim E."/>
            <person name="Daly M.J."/>
            <person name="Fredrickson J.K."/>
            <person name="Makarova K.S."/>
            <person name="Gaidamakova E.K."/>
            <person name="Zhai M."/>
            <person name="Richardson P."/>
        </authorList>
    </citation>
    <scope>NUCLEOTIDE SEQUENCE [LARGE SCALE GENOMIC DNA]</scope>
    <source>
        <strain>DSM 11300 / CIP 105573 / AG-3a</strain>
    </source>
</reference>
<keyword id="KW-0963">Cytoplasm</keyword>
<keyword id="KW-0255">Endonuclease</keyword>
<keyword id="KW-0378">Hydrolase</keyword>
<keyword id="KW-0479">Metal-binding</keyword>
<keyword id="KW-0540">Nuclease</keyword>
<keyword id="KW-0690">Ribosome biogenesis</keyword>
<keyword id="KW-0698">rRNA processing</keyword>
<keyword id="KW-0862">Zinc</keyword>
<organism>
    <name type="scientific">Deinococcus geothermalis (strain DSM 11300 / CIP 105573 / AG-3a)</name>
    <dbReference type="NCBI Taxonomy" id="319795"/>
    <lineage>
        <taxon>Bacteria</taxon>
        <taxon>Thermotogati</taxon>
        <taxon>Deinococcota</taxon>
        <taxon>Deinococci</taxon>
        <taxon>Deinococcales</taxon>
        <taxon>Deinococcaceae</taxon>
        <taxon>Deinococcus</taxon>
    </lineage>
</organism>
<sequence length="155" mass="16872">MIDLIARKTPPPGLRPALRAALTSAMRHFGVEDREVTVVLVGDRTIRALKREHWGEDAPTDVLSFPTWEPGDPFMPPHLGDIIISLDTAGRQAAARGHSLTREVALLASHGLTHLVGHDHPHAEGLGFEEGATGPEWQVFHDAWEAARLALPPEA</sequence>
<accession>Q1IYW5</accession>
<dbReference type="EC" id="3.1.-.-" evidence="1"/>
<dbReference type="EMBL" id="CP000359">
    <property type="protein sequence ID" value="ABF45569.1"/>
    <property type="molecule type" value="Genomic_DNA"/>
</dbReference>
<dbReference type="RefSeq" id="WP_011530406.1">
    <property type="nucleotide sequence ID" value="NC_008025.1"/>
</dbReference>
<dbReference type="SMR" id="Q1IYW5"/>
<dbReference type="STRING" id="319795.Dgeo_1273"/>
<dbReference type="KEGG" id="dge:Dgeo_1273"/>
<dbReference type="eggNOG" id="COG0319">
    <property type="taxonomic scope" value="Bacteria"/>
</dbReference>
<dbReference type="HOGENOM" id="CLU_1692595_0_0_0"/>
<dbReference type="Proteomes" id="UP000002431">
    <property type="component" value="Chromosome"/>
</dbReference>
<dbReference type="GO" id="GO:0005737">
    <property type="term" value="C:cytoplasm"/>
    <property type="evidence" value="ECO:0007669"/>
    <property type="project" value="UniProtKB-SubCell"/>
</dbReference>
<dbReference type="GO" id="GO:0004222">
    <property type="term" value="F:metalloendopeptidase activity"/>
    <property type="evidence" value="ECO:0007669"/>
    <property type="project" value="InterPro"/>
</dbReference>
<dbReference type="GO" id="GO:0004521">
    <property type="term" value="F:RNA endonuclease activity"/>
    <property type="evidence" value="ECO:0007669"/>
    <property type="project" value="UniProtKB-UniRule"/>
</dbReference>
<dbReference type="GO" id="GO:0008270">
    <property type="term" value="F:zinc ion binding"/>
    <property type="evidence" value="ECO:0007669"/>
    <property type="project" value="UniProtKB-UniRule"/>
</dbReference>
<dbReference type="GO" id="GO:0006364">
    <property type="term" value="P:rRNA processing"/>
    <property type="evidence" value="ECO:0007669"/>
    <property type="project" value="UniProtKB-UniRule"/>
</dbReference>
<dbReference type="Gene3D" id="3.40.390.30">
    <property type="entry name" value="Metalloproteases ('zincins'), catalytic domain"/>
    <property type="match status" value="1"/>
</dbReference>
<dbReference type="HAMAP" id="MF_00009">
    <property type="entry name" value="Endoribonucl_YbeY"/>
    <property type="match status" value="1"/>
</dbReference>
<dbReference type="InterPro" id="IPR023091">
    <property type="entry name" value="MetalPrtase_cat_dom_sf_prd"/>
</dbReference>
<dbReference type="InterPro" id="IPR002036">
    <property type="entry name" value="YbeY"/>
</dbReference>
<dbReference type="InterPro" id="IPR020549">
    <property type="entry name" value="YbeY_CS"/>
</dbReference>
<dbReference type="NCBIfam" id="TIGR00043">
    <property type="entry name" value="rRNA maturation RNase YbeY"/>
    <property type="match status" value="1"/>
</dbReference>
<dbReference type="PANTHER" id="PTHR46986">
    <property type="entry name" value="ENDORIBONUCLEASE YBEY, CHLOROPLASTIC"/>
    <property type="match status" value="1"/>
</dbReference>
<dbReference type="PANTHER" id="PTHR46986:SF1">
    <property type="entry name" value="ENDORIBONUCLEASE YBEY, CHLOROPLASTIC"/>
    <property type="match status" value="1"/>
</dbReference>
<dbReference type="Pfam" id="PF02130">
    <property type="entry name" value="YbeY"/>
    <property type="match status" value="1"/>
</dbReference>
<dbReference type="SUPFAM" id="SSF55486">
    <property type="entry name" value="Metalloproteases ('zincins'), catalytic domain"/>
    <property type="match status" value="1"/>
</dbReference>
<dbReference type="PROSITE" id="PS01306">
    <property type="entry name" value="UPF0054"/>
    <property type="match status" value="1"/>
</dbReference>
<name>YBEY_DEIGD</name>
<feature type="chain" id="PRO_0000284198" description="Endoribonuclease YbeY">
    <location>
        <begin position="1"/>
        <end position="155"/>
    </location>
</feature>
<feature type="binding site" evidence="1">
    <location>
        <position position="110"/>
    </location>
    <ligand>
        <name>Zn(2+)</name>
        <dbReference type="ChEBI" id="CHEBI:29105"/>
        <note>catalytic</note>
    </ligand>
</feature>
<feature type="binding site" evidence="1">
    <location>
        <position position="114"/>
    </location>
    <ligand>
        <name>Zn(2+)</name>
        <dbReference type="ChEBI" id="CHEBI:29105"/>
        <note>catalytic</note>
    </ligand>
</feature>
<feature type="binding site" evidence="1">
    <location>
        <position position="120"/>
    </location>
    <ligand>
        <name>Zn(2+)</name>
        <dbReference type="ChEBI" id="CHEBI:29105"/>
        <note>catalytic</note>
    </ligand>
</feature>
<protein>
    <recommendedName>
        <fullName evidence="1">Endoribonuclease YbeY</fullName>
        <ecNumber evidence="1">3.1.-.-</ecNumber>
    </recommendedName>
</protein>
<gene>
    <name evidence="1" type="primary">ybeY</name>
    <name type="ordered locus">Dgeo_1273</name>
</gene>
<evidence type="ECO:0000255" key="1">
    <source>
        <dbReference type="HAMAP-Rule" id="MF_00009"/>
    </source>
</evidence>
<proteinExistence type="inferred from homology"/>
<comment type="function">
    <text evidence="1">Single strand-specific metallo-endoribonuclease involved in late-stage 70S ribosome quality control and in maturation of the 3' terminus of the 16S rRNA.</text>
</comment>
<comment type="cofactor">
    <cofactor evidence="1">
        <name>Zn(2+)</name>
        <dbReference type="ChEBI" id="CHEBI:29105"/>
    </cofactor>
    <text evidence="1">Binds 1 zinc ion.</text>
</comment>
<comment type="subcellular location">
    <subcellularLocation>
        <location evidence="1">Cytoplasm</location>
    </subcellularLocation>
</comment>
<comment type="similarity">
    <text evidence="1">Belongs to the endoribonuclease YbeY family.</text>
</comment>